<accession>O26760</accession>
<evidence type="ECO:0000255" key="1">
    <source>
        <dbReference type="PROSITE-ProRule" id="PRU00675"/>
    </source>
</evidence>
<comment type="function">
    <text>Could be involved in the regulation of nitrogen fixation.</text>
</comment>
<comment type="similarity">
    <text evidence="1">Belongs to the P(II) protein family.</text>
</comment>
<gene>
    <name type="ordered locus">MTH_664</name>
</gene>
<feature type="chain" id="PRO_0000139809" description="Nitrogen regulatory protein P-II 2">
    <location>
        <begin position="1"/>
        <end position="115"/>
    </location>
</feature>
<feature type="modified residue" description="O-UMP-tyrosine" evidence="1">
    <location>
        <position position="54"/>
    </location>
</feature>
<keyword id="KW-0535">Nitrogen fixation</keyword>
<keyword id="KW-0547">Nucleotide-binding</keyword>
<keyword id="KW-0597">Phosphoprotein</keyword>
<keyword id="KW-1185">Reference proteome</keyword>
<keyword id="KW-0804">Transcription</keyword>
<keyword id="KW-0805">Transcription regulation</keyword>
<proteinExistence type="inferred from homology"/>
<name>GLNB2_METTH</name>
<dbReference type="EMBL" id="AE000666">
    <property type="protein sequence ID" value="AAB85169.1"/>
    <property type="molecule type" value="Genomic_DNA"/>
</dbReference>
<dbReference type="PIR" id="D69188">
    <property type="entry name" value="D69188"/>
</dbReference>
<dbReference type="SMR" id="O26760"/>
<dbReference type="FunCoup" id="O26760">
    <property type="interactions" value="40"/>
</dbReference>
<dbReference type="STRING" id="187420.MTH_664"/>
<dbReference type="PaxDb" id="187420-MTH_664"/>
<dbReference type="EnsemblBacteria" id="AAB85169">
    <property type="protein sequence ID" value="AAB85169"/>
    <property type="gene ID" value="MTH_664"/>
</dbReference>
<dbReference type="KEGG" id="mth:MTH_664"/>
<dbReference type="PATRIC" id="fig|187420.15.peg.645"/>
<dbReference type="HOGENOM" id="CLU_082268_0_0_2"/>
<dbReference type="InParanoid" id="O26760"/>
<dbReference type="Proteomes" id="UP000005223">
    <property type="component" value="Chromosome"/>
</dbReference>
<dbReference type="GO" id="GO:0005829">
    <property type="term" value="C:cytosol"/>
    <property type="evidence" value="ECO:0007669"/>
    <property type="project" value="TreeGrafter"/>
</dbReference>
<dbReference type="GO" id="GO:0005524">
    <property type="term" value="F:ATP binding"/>
    <property type="evidence" value="ECO:0007669"/>
    <property type="project" value="TreeGrafter"/>
</dbReference>
<dbReference type="GO" id="GO:0030234">
    <property type="term" value="F:enzyme regulator activity"/>
    <property type="evidence" value="ECO:0007669"/>
    <property type="project" value="InterPro"/>
</dbReference>
<dbReference type="GO" id="GO:0009399">
    <property type="term" value="P:nitrogen fixation"/>
    <property type="evidence" value="ECO:0007669"/>
    <property type="project" value="UniProtKB-KW"/>
</dbReference>
<dbReference type="GO" id="GO:0006808">
    <property type="term" value="P:regulation of nitrogen utilization"/>
    <property type="evidence" value="ECO:0007669"/>
    <property type="project" value="InterPro"/>
</dbReference>
<dbReference type="Gene3D" id="3.30.70.120">
    <property type="match status" value="1"/>
</dbReference>
<dbReference type="InterPro" id="IPR002187">
    <property type="entry name" value="N-reg_PII"/>
</dbReference>
<dbReference type="InterPro" id="IPR011322">
    <property type="entry name" value="N-reg_PII-like_a/b"/>
</dbReference>
<dbReference type="InterPro" id="IPR015867">
    <property type="entry name" value="N-reg_PII/ATP_PRibTrfase_C"/>
</dbReference>
<dbReference type="InterPro" id="IPR017918">
    <property type="entry name" value="N-reg_PII_CS"/>
</dbReference>
<dbReference type="PANTHER" id="PTHR30115">
    <property type="entry name" value="NITROGEN REGULATORY PROTEIN P-II"/>
    <property type="match status" value="1"/>
</dbReference>
<dbReference type="PANTHER" id="PTHR30115:SF11">
    <property type="entry name" value="NITROGEN REGULATORY PROTEIN P-II HOMOLOG"/>
    <property type="match status" value="1"/>
</dbReference>
<dbReference type="Pfam" id="PF00543">
    <property type="entry name" value="P-II"/>
    <property type="match status" value="1"/>
</dbReference>
<dbReference type="PRINTS" id="PR00340">
    <property type="entry name" value="PIIGLNB"/>
</dbReference>
<dbReference type="SMART" id="SM00938">
    <property type="entry name" value="P-II"/>
    <property type="match status" value="1"/>
</dbReference>
<dbReference type="SUPFAM" id="SSF54913">
    <property type="entry name" value="GlnB-like"/>
    <property type="match status" value="1"/>
</dbReference>
<dbReference type="PROSITE" id="PS00638">
    <property type="entry name" value="PII_GLNB_CTER"/>
    <property type="match status" value="1"/>
</dbReference>
<dbReference type="PROSITE" id="PS51343">
    <property type="entry name" value="PII_GLNB_DOM"/>
    <property type="match status" value="1"/>
</dbReference>
<protein>
    <recommendedName>
        <fullName>Nitrogen regulatory protein P-II 2</fullName>
    </recommendedName>
</protein>
<sequence>MIFMKEIVAIIRPEKLEEVKNALEAAGCHGMTVTEVRGRGRQLGITESYRGRDYRIDLLPKTKIEIVVNDEDVDTVVETIVKSAQTGDIGDGKIFISGVDEVVRIRTGESGKKAV</sequence>
<organism>
    <name type="scientific">Methanothermobacter thermautotrophicus (strain ATCC 29096 / DSM 1053 / JCM 10044 / NBRC 100330 / Delta H)</name>
    <name type="common">Methanobacterium thermoautotrophicum</name>
    <dbReference type="NCBI Taxonomy" id="187420"/>
    <lineage>
        <taxon>Archaea</taxon>
        <taxon>Methanobacteriati</taxon>
        <taxon>Methanobacteriota</taxon>
        <taxon>Methanomada group</taxon>
        <taxon>Methanobacteria</taxon>
        <taxon>Methanobacteriales</taxon>
        <taxon>Methanobacteriaceae</taxon>
        <taxon>Methanothermobacter</taxon>
    </lineage>
</organism>
<reference key="1">
    <citation type="journal article" date="1997" name="J. Bacteriol.">
        <title>Complete genome sequence of Methanobacterium thermoautotrophicum deltaH: functional analysis and comparative genomics.</title>
        <authorList>
            <person name="Smith D.R."/>
            <person name="Doucette-Stamm L.A."/>
            <person name="Deloughery C."/>
            <person name="Lee H.-M."/>
            <person name="Dubois J."/>
            <person name="Aldredge T."/>
            <person name="Bashirzadeh R."/>
            <person name="Blakely D."/>
            <person name="Cook R."/>
            <person name="Gilbert K."/>
            <person name="Harrison D."/>
            <person name="Hoang L."/>
            <person name="Keagle P."/>
            <person name="Lumm W."/>
            <person name="Pothier B."/>
            <person name="Qiu D."/>
            <person name="Spadafora R."/>
            <person name="Vicare R."/>
            <person name="Wang Y."/>
            <person name="Wierzbowski J."/>
            <person name="Gibson R."/>
            <person name="Jiwani N."/>
            <person name="Caruso A."/>
            <person name="Bush D."/>
            <person name="Safer H."/>
            <person name="Patwell D."/>
            <person name="Prabhakar S."/>
            <person name="McDougall S."/>
            <person name="Shimer G."/>
            <person name="Goyal A."/>
            <person name="Pietrovski S."/>
            <person name="Church G.M."/>
            <person name="Daniels C.J."/>
            <person name="Mao J.-I."/>
            <person name="Rice P."/>
            <person name="Noelling J."/>
            <person name="Reeve J.N."/>
        </authorList>
    </citation>
    <scope>NUCLEOTIDE SEQUENCE [LARGE SCALE GENOMIC DNA]</scope>
    <source>
        <strain>ATCC 29096 / DSM 1053 / JCM 10044 / NBRC 100330 / Delta H</strain>
    </source>
</reference>